<keyword id="KW-1003">Cell membrane</keyword>
<keyword id="KW-0297">G-protein coupled receptor</keyword>
<keyword id="KW-0325">Glycoprotein</keyword>
<keyword id="KW-0449">Lipoprotein</keyword>
<keyword id="KW-0472">Membrane</keyword>
<keyword id="KW-0564">Palmitate</keyword>
<keyword id="KW-0675">Receptor</keyword>
<keyword id="KW-1185">Reference proteome</keyword>
<keyword id="KW-0807">Transducer</keyword>
<keyword id="KW-0812">Transmembrane</keyword>
<keyword id="KW-1133">Transmembrane helix</keyword>
<proteinExistence type="evidence at protein level"/>
<sequence>MILVSTTSAVPGALSSPSSPSNSSQEELLDDRDPLLVRAELALLSTIFVAVALSNGLVLGALIRRGRRGRWAPMHVFISHLCLADLAVALFQVLPQLAWDATDRFHGPDALCRAVKYLQMVGMYASSYMILAMTLDRHRAICRPMLAYRHGGGARWNRPVLVAWAFSLLLSLPQLFIFAQRDVGNGSGVFDCWARFAEPWGLRAYVTWIALMVFVAPALGIAACQVLIFREIHASLVPGPSERAGRRRRGHRTGSPSEGAHVSAAMAKTVRMTLVIVIVYVLCWAPFFLVQLWAAWDPEAPLERPPFVLLMLLASLNSCTNPWIYASFSSSVSSELRSLLCCAQRHTTHSLGPQDESCATASSSLMKDTPS</sequence>
<name>V2R_MOUSE</name>
<organism>
    <name type="scientific">Mus musculus</name>
    <name type="common">Mouse</name>
    <dbReference type="NCBI Taxonomy" id="10090"/>
    <lineage>
        <taxon>Eukaryota</taxon>
        <taxon>Metazoa</taxon>
        <taxon>Chordata</taxon>
        <taxon>Craniata</taxon>
        <taxon>Vertebrata</taxon>
        <taxon>Euteleostomi</taxon>
        <taxon>Mammalia</taxon>
        <taxon>Eutheria</taxon>
        <taxon>Euarchontoglires</taxon>
        <taxon>Glires</taxon>
        <taxon>Rodentia</taxon>
        <taxon>Myomorpha</taxon>
        <taxon>Muroidea</taxon>
        <taxon>Muridae</taxon>
        <taxon>Murinae</taxon>
        <taxon>Mus</taxon>
        <taxon>Mus</taxon>
    </lineage>
</organism>
<evidence type="ECO:0000250" key="1"/>
<evidence type="ECO:0000250" key="2">
    <source>
        <dbReference type="UniProtKB" id="P30518"/>
    </source>
</evidence>
<evidence type="ECO:0000255" key="3"/>
<evidence type="ECO:0000255" key="4">
    <source>
        <dbReference type="PROSITE-ProRule" id="PRU00521"/>
    </source>
</evidence>
<evidence type="ECO:0000256" key="5">
    <source>
        <dbReference type="SAM" id="MobiDB-lite"/>
    </source>
</evidence>
<evidence type="ECO:0000269" key="6">
    <source>
    </source>
</evidence>
<evidence type="ECO:0000312" key="7">
    <source>
        <dbReference type="EMBL" id="CAA07187.1"/>
    </source>
</evidence>
<evidence type="ECO:0000312" key="8">
    <source>
        <dbReference type="EMBL" id="CAC34589.1"/>
    </source>
</evidence>
<feature type="chain" id="PRO_0000070209" description="Vasopressin V2 receptor">
    <location>
        <begin position="1"/>
        <end position="371"/>
    </location>
</feature>
<feature type="topological domain" description="Extracellular" evidence="3">
    <location>
        <begin position="1"/>
        <end position="38"/>
    </location>
</feature>
<feature type="transmembrane region" description="Helical; Name=1" evidence="3">
    <location>
        <begin position="39"/>
        <end position="63"/>
    </location>
</feature>
<feature type="topological domain" description="Cytoplasmic" evidence="3">
    <location>
        <begin position="64"/>
        <end position="77"/>
    </location>
</feature>
<feature type="transmembrane region" description="Helical; Name=2" evidence="3">
    <location>
        <begin position="78"/>
        <end position="98"/>
    </location>
</feature>
<feature type="topological domain" description="Extracellular" evidence="3">
    <location>
        <begin position="99"/>
        <end position="113"/>
    </location>
</feature>
<feature type="transmembrane region" description="Helical; Name=3" evidence="3">
    <location>
        <begin position="114"/>
        <end position="135"/>
    </location>
</feature>
<feature type="topological domain" description="Cytoplasmic" evidence="3">
    <location>
        <begin position="136"/>
        <end position="159"/>
    </location>
</feature>
<feature type="transmembrane region" description="Helical; Name=4" evidence="3">
    <location>
        <begin position="160"/>
        <end position="180"/>
    </location>
</feature>
<feature type="topological domain" description="Extracellular" evidence="3">
    <location>
        <begin position="181"/>
        <end position="200"/>
    </location>
</feature>
<feature type="transmembrane region" description="Helical; Name=5" evidence="3">
    <location>
        <begin position="201"/>
        <end position="220"/>
    </location>
</feature>
<feature type="topological domain" description="Cytoplasmic" evidence="3">
    <location>
        <begin position="221"/>
        <end position="271"/>
    </location>
</feature>
<feature type="transmembrane region" description="Helical; Name=6" evidence="3">
    <location>
        <begin position="272"/>
        <end position="293"/>
    </location>
</feature>
<feature type="topological domain" description="Extracellular" evidence="3">
    <location>
        <begin position="294"/>
        <end position="308"/>
    </location>
</feature>
<feature type="transmembrane region" description="Helical; Name=7" evidence="3">
    <location>
        <begin position="309"/>
        <end position="328"/>
    </location>
</feature>
<feature type="topological domain" description="Cytoplasmic" evidence="3">
    <location>
        <begin position="329"/>
        <end position="371"/>
    </location>
</feature>
<feature type="region of interest" description="Disordered" evidence="5">
    <location>
        <begin position="1"/>
        <end position="27"/>
    </location>
</feature>
<feature type="region of interest" description="Disordered" evidence="5">
    <location>
        <begin position="240"/>
        <end position="259"/>
    </location>
</feature>
<feature type="region of interest" description="Disordered" evidence="5">
    <location>
        <begin position="349"/>
        <end position="371"/>
    </location>
</feature>
<feature type="compositionally biased region" description="Low complexity" evidence="5">
    <location>
        <begin position="15"/>
        <end position="24"/>
    </location>
</feature>
<feature type="compositionally biased region" description="Polar residues" evidence="5">
    <location>
        <begin position="357"/>
        <end position="371"/>
    </location>
</feature>
<feature type="lipid moiety-binding region" description="S-palmitoyl cysteine" evidence="1">
    <location>
        <position position="341"/>
    </location>
</feature>
<feature type="lipid moiety-binding region" description="S-palmitoyl cysteine" evidence="1">
    <location>
        <position position="342"/>
    </location>
</feature>
<feature type="glycosylation site" description="N-linked (GlcNAc...) asparagine" evidence="3">
    <location>
        <position position="22"/>
    </location>
</feature>
<feature type="glycosylation site" description="N-linked (GlcNAc...) asparagine" evidence="3">
    <location>
        <position position="185"/>
    </location>
</feature>
<accession>O88721</accession>
<dbReference type="EMBL" id="AJ006691">
    <property type="protein sequence ID" value="CAA07187.1"/>
    <property type="molecule type" value="Genomic_DNA"/>
</dbReference>
<dbReference type="EMBL" id="AF133093">
    <property type="status" value="NOT_ANNOTATED_CDS"/>
    <property type="molecule type" value="Genomic_DNA"/>
</dbReference>
<dbReference type="EMBL" id="AJ310753">
    <property type="protein sequence ID" value="CAC34589.1"/>
    <property type="molecule type" value="mRNA"/>
</dbReference>
<dbReference type="CCDS" id="CCDS30216.1"/>
<dbReference type="RefSeq" id="NP_062277.1">
    <property type="nucleotide sequence ID" value="NM_019404.2"/>
</dbReference>
<dbReference type="RefSeq" id="XP_006527819.1">
    <property type="nucleotide sequence ID" value="XM_006527756.4"/>
</dbReference>
<dbReference type="SMR" id="O88721"/>
<dbReference type="FunCoup" id="O88721">
    <property type="interactions" value="771"/>
</dbReference>
<dbReference type="STRING" id="10090.ENSMUSP00000033765"/>
<dbReference type="GlyCosmos" id="O88721">
    <property type="glycosylation" value="2 sites, No reported glycans"/>
</dbReference>
<dbReference type="GlyGen" id="O88721">
    <property type="glycosylation" value="2 sites"/>
</dbReference>
<dbReference type="PhosphoSitePlus" id="O88721"/>
<dbReference type="PaxDb" id="10090-ENSMUSP00000033765"/>
<dbReference type="Antibodypedia" id="17443">
    <property type="antibodies" value="293 antibodies from 32 providers"/>
</dbReference>
<dbReference type="DNASU" id="12000"/>
<dbReference type="Ensembl" id="ENSMUST00000033765.8">
    <property type="protein sequence ID" value="ENSMUSP00000033765.8"/>
    <property type="gene ID" value="ENSMUSG00000031390.9"/>
</dbReference>
<dbReference type="GeneID" id="12000"/>
<dbReference type="KEGG" id="mmu:12000"/>
<dbReference type="UCSC" id="uc009tmx.1">
    <property type="organism name" value="mouse"/>
</dbReference>
<dbReference type="AGR" id="MGI:88123"/>
<dbReference type="CTD" id="554"/>
<dbReference type="MGI" id="MGI:88123">
    <property type="gene designation" value="Avpr2"/>
</dbReference>
<dbReference type="VEuPathDB" id="HostDB:ENSMUSG00000031390"/>
<dbReference type="eggNOG" id="KOG3656">
    <property type="taxonomic scope" value="Eukaryota"/>
</dbReference>
<dbReference type="GeneTree" id="ENSGT01050000244882"/>
<dbReference type="HOGENOM" id="CLU_009579_15_3_1"/>
<dbReference type="InParanoid" id="O88721"/>
<dbReference type="OMA" id="FIATCQG"/>
<dbReference type="OrthoDB" id="5987909at2759"/>
<dbReference type="PhylomeDB" id="O88721"/>
<dbReference type="TreeFam" id="TF106499"/>
<dbReference type="Reactome" id="R-MMU-388479">
    <property type="pathway name" value="Vasopressin-like receptors"/>
</dbReference>
<dbReference type="Reactome" id="R-MMU-418555">
    <property type="pathway name" value="G alpha (s) signalling events"/>
</dbReference>
<dbReference type="Reactome" id="R-MMU-432040">
    <property type="pathway name" value="Vasopressin regulates renal water homeostasis via Aquaporins"/>
</dbReference>
<dbReference type="Reactome" id="R-MMU-8856825">
    <property type="pathway name" value="Cargo recognition for clathrin-mediated endocytosis"/>
</dbReference>
<dbReference type="Reactome" id="R-MMU-8856828">
    <property type="pathway name" value="Clathrin-mediated endocytosis"/>
</dbReference>
<dbReference type="BioGRID-ORCS" id="12000">
    <property type="hits" value="2 hits in 78 CRISPR screens"/>
</dbReference>
<dbReference type="PRO" id="PR:O88721"/>
<dbReference type="Proteomes" id="UP000000589">
    <property type="component" value="Chromosome X"/>
</dbReference>
<dbReference type="RNAct" id="O88721">
    <property type="molecule type" value="protein"/>
</dbReference>
<dbReference type="Bgee" id="ENSMUSG00000031390">
    <property type="expression patterns" value="Expressed in right kidney and 43 other cell types or tissues"/>
</dbReference>
<dbReference type="ExpressionAtlas" id="O88721">
    <property type="expression patterns" value="baseline and differential"/>
</dbReference>
<dbReference type="GO" id="GO:0030139">
    <property type="term" value="C:endocytic vesicle"/>
    <property type="evidence" value="ECO:0007669"/>
    <property type="project" value="Ensembl"/>
</dbReference>
<dbReference type="GO" id="GO:0005768">
    <property type="term" value="C:endosome"/>
    <property type="evidence" value="ECO:0007669"/>
    <property type="project" value="Ensembl"/>
</dbReference>
<dbReference type="GO" id="GO:0048471">
    <property type="term" value="C:perinuclear region of cytoplasm"/>
    <property type="evidence" value="ECO:0007669"/>
    <property type="project" value="Ensembl"/>
</dbReference>
<dbReference type="GO" id="GO:0005886">
    <property type="term" value="C:plasma membrane"/>
    <property type="evidence" value="ECO:0007669"/>
    <property type="project" value="UniProtKB-SubCell"/>
</dbReference>
<dbReference type="GO" id="GO:0038023">
    <property type="term" value="F:signaling receptor activity"/>
    <property type="evidence" value="ECO:0000315"/>
    <property type="project" value="MGI"/>
</dbReference>
<dbReference type="GO" id="GO:0005000">
    <property type="term" value="F:vasopressin receptor activity"/>
    <property type="evidence" value="ECO:0007669"/>
    <property type="project" value="Ensembl"/>
</dbReference>
<dbReference type="GO" id="GO:0008285">
    <property type="term" value="P:negative regulation of cell population proliferation"/>
    <property type="evidence" value="ECO:0007669"/>
    <property type="project" value="Ensembl"/>
</dbReference>
<dbReference type="GO" id="GO:0035811">
    <property type="term" value="P:negative regulation of urine volume"/>
    <property type="evidence" value="ECO:0007669"/>
    <property type="project" value="Ensembl"/>
</dbReference>
<dbReference type="GO" id="GO:0008284">
    <property type="term" value="P:positive regulation of cell population proliferation"/>
    <property type="evidence" value="ECO:0007669"/>
    <property type="project" value="Ensembl"/>
</dbReference>
<dbReference type="GO" id="GO:0010628">
    <property type="term" value="P:positive regulation of gene expression"/>
    <property type="evidence" value="ECO:0000250"/>
    <property type="project" value="UniProtKB"/>
</dbReference>
<dbReference type="GO" id="GO:1902533">
    <property type="term" value="P:positive regulation of intracellular signal transduction"/>
    <property type="evidence" value="ECO:0000315"/>
    <property type="project" value="MGI"/>
</dbReference>
<dbReference type="GO" id="GO:0003084">
    <property type="term" value="P:positive regulation of systemic arterial blood pressure"/>
    <property type="evidence" value="ECO:0007669"/>
    <property type="project" value="Ensembl"/>
</dbReference>
<dbReference type="GO" id="GO:0034097">
    <property type="term" value="P:response to cytokine"/>
    <property type="evidence" value="ECO:0000315"/>
    <property type="project" value="MGI"/>
</dbReference>
<dbReference type="GO" id="GO:0021537">
    <property type="term" value="P:telencephalon development"/>
    <property type="evidence" value="ECO:0007669"/>
    <property type="project" value="Ensembl"/>
</dbReference>
<dbReference type="CDD" id="cd15388">
    <property type="entry name" value="7tmA_V2R"/>
    <property type="match status" value="1"/>
</dbReference>
<dbReference type="FunFam" id="1.20.1070.10:FF:000190">
    <property type="entry name" value="Vasopressin V2 receptor"/>
    <property type="match status" value="1"/>
</dbReference>
<dbReference type="Gene3D" id="1.20.1070.10">
    <property type="entry name" value="Rhodopsin 7-helix transmembrane proteins"/>
    <property type="match status" value="1"/>
</dbReference>
<dbReference type="InterPro" id="IPR000276">
    <property type="entry name" value="GPCR_Rhodpsn"/>
</dbReference>
<dbReference type="InterPro" id="IPR017452">
    <property type="entry name" value="GPCR_Rhodpsn_7TM"/>
</dbReference>
<dbReference type="InterPro" id="IPR001817">
    <property type="entry name" value="Vasoprsn_rcpt"/>
</dbReference>
<dbReference type="InterPro" id="IPR000161">
    <property type="entry name" value="Vprsn_rcpt_V2"/>
</dbReference>
<dbReference type="PANTHER" id="PTHR24241">
    <property type="entry name" value="NEUROPEPTIDE RECEPTOR-RELATED G-PROTEIN COUPLED RECEPTOR"/>
    <property type="match status" value="1"/>
</dbReference>
<dbReference type="PANTHER" id="PTHR24241:SF20">
    <property type="entry name" value="VASOPRESSIN V2 RECEPTOR"/>
    <property type="match status" value="1"/>
</dbReference>
<dbReference type="Pfam" id="PF00001">
    <property type="entry name" value="7tm_1"/>
    <property type="match status" value="1"/>
</dbReference>
<dbReference type="PRINTS" id="PR00237">
    <property type="entry name" value="GPCRRHODOPSN"/>
</dbReference>
<dbReference type="PRINTS" id="PR00896">
    <property type="entry name" value="VASOPRESSINR"/>
</dbReference>
<dbReference type="PRINTS" id="PR00898">
    <property type="entry name" value="VASOPRSNV2R"/>
</dbReference>
<dbReference type="SUPFAM" id="SSF81321">
    <property type="entry name" value="Family A G protein-coupled receptor-like"/>
    <property type="match status" value="1"/>
</dbReference>
<dbReference type="PROSITE" id="PS00237">
    <property type="entry name" value="G_PROTEIN_RECEP_F1_1"/>
    <property type="match status" value="1"/>
</dbReference>
<dbReference type="PROSITE" id="PS50262">
    <property type="entry name" value="G_PROTEIN_RECEP_F1_2"/>
    <property type="match status" value="1"/>
</dbReference>
<gene>
    <name type="primary">Avpr2</name>
    <name type="synonym">V2r</name>
</gene>
<reference evidence="7" key="1">
    <citation type="submission" date="1998-06" db="EMBL/GenBank/DDBJ databases">
        <title>Structure and functional expression of the mouse vasopressin V2 receptor gene.</title>
        <authorList>
            <person name="Guenther G."/>
            <person name="Eichhorst J."/>
            <person name="Krause G."/>
            <person name="Rosenthal W."/>
            <person name="Oksche A."/>
        </authorList>
    </citation>
    <scope>NUCLEOTIDE SEQUENCE [GENOMIC DNA]</scope>
    <source>
        <strain>129/SvJ</strain>
    </source>
</reference>
<reference key="2">
    <citation type="submission" date="1999-03" db="EMBL/GenBank/DDBJ databases">
        <title>Comparative sequence analysis of the mouse L1cam locus and the corresponding region of human Xq28.</title>
        <authorList>
            <person name="Platzer M."/>
            <person name="Brenner V."/>
            <person name="Reichwald K."/>
            <person name="Wiehe T."/>
            <person name="Oksche A."/>
            <person name="Rosenthal A."/>
        </authorList>
    </citation>
    <scope>NUCLEOTIDE SEQUENCE [GENOMIC DNA]</scope>
</reference>
<reference evidence="8" key="3">
    <citation type="submission" date="2001-03" db="EMBL/GenBank/DDBJ databases">
        <title>Species differences in vasopressin V2 receptors: mRNA tissue distribution and functional properties of the human and murine receptors.</title>
        <authorList>
            <person name="Oksche A."/>
            <person name="Leder G."/>
            <person name="Rosenthal W."/>
        </authorList>
    </citation>
    <scope>NUCLEOTIDE SEQUENCE [MRNA]</scope>
    <source>
        <strain>129/SvJ</strain>
        <tissue>Kidney</tissue>
    </source>
</reference>
<reference key="4">
    <citation type="journal article" date="2020" name="Theranostics">
        <title>A snake toxin as a theranostic agent for the type 2 vasopressin receptor.</title>
        <authorList>
            <person name="Droctove L."/>
            <person name="Lancien M."/>
            <person name="Tran V.L."/>
            <person name="Susset M."/>
            <person name="Jego B."/>
            <person name="Theodoro F."/>
            <person name="Kessler P."/>
            <person name="Mourier G."/>
            <person name="Robin P."/>
            <person name="Diarra S.S."/>
            <person name="Palea S."/>
            <person name="Flahault A."/>
            <person name="Chorfa A."/>
            <person name="Corbani M."/>
            <person name="Llorens-Cortes C."/>
            <person name="Mouillac B."/>
            <person name="Mendre C."/>
            <person name="Pruvost A."/>
            <person name="Servent D."/>
            <person name="Truillet C."/>
            <person name="Gilles N."/>
        </authorList>
    </citation>
    <scope>TISSUE SPECIFICITY</scope>
</reference>
<protein>
    <recommendedName>
        <fullName>Vasopressin V2 receptor</fullName>
        <shortName>V2R</shortName>
    </recommendedName>
    <alternativeName>
        <fullName>AVPR V2</fullName>
    </alternativeName>
    <alternativeName>
        <fullName>Antidiuretic hormone receptor</fullName>
    </alternativeName>
    <alternativeName>
        <fullName>Renal-type arginine vasopressin receptor</fullName>
    </alternativeName>
</protein>
<comment type="function">
    <text evidence="2">Receptor for arginine vasopressin. The activity of this receptor is mediated by G proteins which activate adenylate cyclase. Involved in renal water reabsorption (By similarity).</text>
</comment>
<comment type="subunit">
    <text evidence="2">Interacts with ARRDC4 (By similarity). Identified in a complex containing at least ARRDC4, V2R and HGS (By similarity). Interacts with TMEM147 (By similarity).</text>
</comment>
<comment type="subcellular location">
    <subcellularLocation>
        <location evidence="2">Cell membrane</location>
        <topology evidence="2">Multi-pass membrane protein</topology>
    </subcellularLocation>
</comment>
<comment type="tissue specificity">
    <text evidence="6">Highly expressed in kidney (at protein level) and moderately expressed in liver (at protein level). No or extremely low expression in left ventricule, muscle, bone and brain (at protein level).</text>
</comment>
<comment type="similarity">
    <text evidence="4">Belongs to the G-protein coupled receptor 1 family. Vasopressin/oxytocin receptor subfamily.</text>
</comment>